<protein>
    <recommendedName>
        <fullName evidence="1">1-deoxy-D-xylulose-5-phosphate synthase 1</fullName>
        <ecNumber evidence="1">2.2.1.7</ecNumber>
    </recommendedName>
    <alternativeName>
        <fullName evidence="1">1-deoxyxylulose-5-phosphate synthase 1</fullName>
        <shortName evidence="1">DXP synthase 1</shortName>
        <shortName evidence="1">DXPS 1</shortName>
    </alternativeName>
</protein>
<organism>
    <name type="scientific">Rhodospirillum rubrum (strain ATCC 11170 / ATH 1.1.1 / DSM 467 / LMG 4362 / NCIMB 8255 / S1)</name>
    <dbReference type="NCBI Taxonomy" id="269796"/>
    <lineage>
        <taxon>Bacteria</taxon>
        <taxon>Pseudomonadati</taxon>
        <taxon>Pseudomonadota</taxon>
        <taxon>Alphaproteobacteria</taxon>
        <taxon>Rhodospirillales</taxon>
        <taxon>Rhodospirillaceae</taxon>
        <taxon>Rhodospirillum</taxon>
    </lineage>
</organism>
<reference key="1">
    <citation type="journal article" date="2011" name="Stand. Genomic Sci.">
        <title>Complete genome sequence of Rhodospirillum rubrum type strain (S1).</title>
        <authorList>
            <person name="Munk A.C."/>
            <person name="Copeland A."/>
            <person name="Lucas S."/>
            <person name="Lapidus A."/>
            <person name="Del Rio T.G."/>
            <person name="Barry K."/>
            <person name="Detter J.C."/>
            <person name="Hammon N."/>
            <person name="Israni S."/>
            <person name="Pitluck S."/>
            <person name="Brettin T."/>
            <person name="Bruce D."/>
            <person name="Han C."/>
            <person name="Tapia R."/>
            <person name="Gilna P."/>
            <person name="Schmutz J."/>
            <person name="Larimer F."/>
            <person name="Land M."/>
            <person name="Kyrpides N.C."/>
            <person name="Mavromatis K."/>
            <person name="Richardson P."/>
            <person name="Rohde M."/>
            <person name="Goeker M."/>
            <person name="Klenk H.P."/>
            <person name="Zhang Y."/>
            <person name="Roberts G.P."/>
            <person name="Reslewic S."/>
            <person name="Schwartz D.C."/>
        </authorList>
    </citation>
    <scope>NUCLEOTIDE SEQUENCE [LARGE SCALE GENOMIC DNA]</scope>
    <source>
        <strain>ATCC 11170 / ATH 1.1.1 / DSM 467 / LMG 4362 / NCIMB 8255 / S1</strain>
    </source>
</reference>
<comment type="function">
    <text evidence="1">Catalyzes the acyloin condensation reaction between C atoms 2 and 3 of pyruvate and glyceraldehyde 3-phosphate to yield 1-deoxy-D-xylulose-5-phosphate (DXP).</text>
</comment>
<comment type="catalytic activity">
    <reaction evidence="1">
        <text>D-glyceraldehyde 3-phosphate + pyruvate + H(+) = 1-deoxy-D-xylulose 5-phosphate + CO2</text>
        <dbReference type="Rhea" id="RHEA:12605"/>
        <dbReference type="ChEBI" id="CHEBI:15361"/>
        <dbReference type="ChEBI" id="CHEBI:15378"/>
        <dbReference type="ChEBI" id="CHEBI:16526"/>
        <dbReference type="ChEBI" id="CHEBI:57792"/>
        <dbReference type="ChEBI" id="CHEBI:59776"/>
        <dbReference type="EC" id="2.2.1.7"/>
    </reaction>
</comment>
<comment type="cofactor">
    <cofactor evidence="1">
        <name>Mg(2+)</name>
        <dbReference type="ChEBI" id="CHEBI:18420"/>
    </cofactor>
    <text evidence="1">Binds 1 Mg(2+) ion per subunit.</text>
</comment>
<comment type="cofactor">
    <cofactor evidence="1">
        <name>thiamine diphosphate</name>
        <dbReference type="ChEBI" id="CHEBI:58937"/>
    </cofactor>
    <text evidence="1">Binds 1 thiamine pyrophosphate per subunit.</text>
</comment>
<comment type="pathway">
    <text evidence="1">Metabolic intermediate biosynthesis; 1-deoxy-D-xylulose 5-phosphate biosynthesis; 1-deoxy-D-xylulose 5-phosphate from D-glyceraldehyde 3-phosphate and pyruvate: step 1/1.</text>
</comment>
<comment type="subunit">
    <text evidence="1">Homodimer.</text>
</comment>
<comment type="similarity">
    <text evidence="1">Belongs to the transketolase family. DXPS subfamily.</text>
</comment>
<gene>
    <name evidence="1" type="primary">dxs1</name>
    <name type="ordered locus">Rru_A0054</name>
</gene>
<dbReference type="EC" id="2.2.1.7" evidence="1"/>
<dbReference type="EMBL" id="CP000230">
    <property type="protein sequence ID" value="ABC20859.1"/>
    <property type="molecule type" value="Genomic_DNA"/>
</dbReference>
<dbReference type="RefSeq" id="YP_425146.1">
    <property type="nucleotide sequence ID" value="NC_007643.1"/>
</dbReference>
<dbReference type="SMR" id="Q2RYD6"/>
<dbReference type="STRING" id="269796.Rru_A0054"/>
<dbReference type="EnsemblBacteria" id="ABC20859">
    <property type="protein sequence ID" value="ABC20859"/>
    <property type="gene ID" value="Rru_A0054"/>
</dbReference>
<dbReference type="KEGG" id="rru:Rru_A0054"/>
<dbReference type="PATRIC" id="fig|269796.9.peg.104"/>
<dbReference type="eggNOG" id="COG1154">
    <property type="taxonomic scope" value="Bacteria"/>
</dbReference>
<dbReference type="HOGENOM" id="CLU_009227_1_4_5"/>
<dbReference type="PhylomeDB" id="Q2RYD6"/>
<dbReference type="UniPathway" id="UPA00064">
    <property type="reaction ID" value="UER00091"/>
</dbReference>
<dbReference type="Proteomes" id="UP000001929">
    <property type="component" value="Chromosome"/>
</dbReference>
<dbReference type="GO" id="GO:0008661">
    <property type="term" value="F:1-deoxy-D-xylulose-5-phosphate synthase activity"/>
    <property type="evidence" value="ECO:0007669"/>
    <property type="project" value="UniProtKB-UniRule"/>
</dbReference>
<dbReference type="GO" id="GO:0000287">
    <property type="term" value="F:magnesium ion binding"/>
    <property type="evidence" value="ECO:0007669"/>
    <property type="project" value="UniProtKB-UniRule"/>
</dbReference>
<dbReference type="GO" id="GO:0030976">
    <property type="term" value="F:thiamine pyrophosphate binding"/>
    <property type="evidence" value="ECO:0007669"/>
    <property type="project" value="UniProtKB-UniRule"/>
</dbReference>
<dbReference type="GO" id="GO:0052865">
    <property type="term" value="P:1-deoxy-D-xylulose 5-phosphate biosynthetic process"/>
    <property type="evidence" value="ECO:0007669"/>
    <property type="project" value="UniProtKB-UniPathway"/>
</dbReference>
<dbReference type="GO" id="GO:0019682">
    <property type="term" value="P:glyceraldehyde-3-phosphate metabolic process"/>
    <property type="evidence" value="ECO:0007669"/>
    <property type="project" value="UniProtKB-ARBA"/>
</dbReference>
<dbReference type="GO" id="GO:0016114">
    <property type="term" value="P:terpenoid biosynthetic process"/>
    <property type="evidence" value="ECO:0007669"/>
    <property type="project" value="UniProtKB-UniRule"/>
</dbReference>
<dbReference type="GO" id="GO:0009228">
    <property type="term" value="P:thiamine biosynthetic process"/>
    <property type="evidence" value="ECO:0007669"/>
    <property type="project" value="UniProtKB-UniRule"/>
</dbReference>
<dbReference type="CDD" id="cd02007">
    <property type="entry name" value="TPP_DXS"/>
    <property type="match status" value="1"/>
</dbReference>
<dbReference type="CDD" id="cd07033">
    <property type="entry name" value="TPP_PYR_DXS_TK_like"/>
    <property type="match status" value="1"/>
</dbReference>
<dbReference type="FunFam" id="3.40.50.920:FF:000002">
    <property type="entry name" value="1-deoxy-D-xylulose-5-phosphate synthase"/>
    <property type="match status" value="1"/>
</dbReference>
<dbReference type="FunFam" id="3.40.50.970:FF:000005">
    <property type="entry name" value="1-deoxy-D-xylulose-5-phosphate synthase"/>
    <property type="match status" value="1"/>
</dbReference>
<dbReference type="Gene3D" id="3.40.50.920">
    <property type="match status" value="1"/>
</dbReference>
<dbReference type="Gene3D" id="3.40.50.970">
    <property type="match status" value="2"/>
</dbReference>
<dbReference type="HAMAP" id="MF_00315">
    <property type="entry name" value="DXP_synth"/>
    <property type="match status" value="1"/>
</dbReference>
<dbReference type="InterPro" id="IPR005477">
    <property type="entry name" value="Dxylulose-5-P_synthase"/>
</dbReference>
<dbReference type="InterPro" id="IPR029061">
    <property type="entry name" value="THDP-binding"/>
</dbReference>
<dbReference type="InterPro" id="IPR009014">
    <property type="entry name" value="Transketo_C/PFOR_II"/>
</dbReference>
<dbReference type="InterPro" id="IPR005475">
    <property type="entry name" value="Transketolase-like_Pyr-bd"/>
</dbReference>
<dbReference type="InterPro" id="IPR020826">
    <property type="entry name" value="Transketolase_BS"/>
</dbReference>
<dbReference type="InterPro" id="IPR033248">
    <property type="entry name" value="Transketolase_C"/>
</dbReference>
<dbReference type="InterPro" id="IPR049557">
    <property type="entry name" value="Transketolase_CS"/>
</dbReference>
<dbReference type="NCBIfam" id="TIGR00204">
    <property type="entry name" value="dxs"/>
    <property type="match status" value="1"/>
</dbReference>
<dbReference type="NCBIfam" id="NF003933">
    <property type="entry name" value="PRK05444.2-2"/>
    <property type="match status" value="1"/>
</dbReference>
<dbReference type="PANTHER" id="PTHR43322">
    <property type="entry name" value="1-D-DEOXYXYLULOSE 5-PHOSPHATE SYNTHASE-RELATED"/>
    <property type="match status" value="1"/>
</dbReference>
<dbReference type="PANTHER" id="PTHR43322:SF5">
    <property type="entry name" value="1-DEOXY-D-XYLULOSE-5-PHOSPHATE SYNTHASE, CHLOROPLASTIC"/>
    <property type="match status" value="1"/>
</dbReference>
<dbReference type="Pfam" id="PF13292">
    <property type="entry name" value="DXP_synthase_N"/>
    <property type="match status" value="1"/>
</dbReference>
<dbReference type="Pfam" id="PF02779">
    <property type="entry name" value="Transket_pyr"/>
    <property type="match status" value="1"/>
</dbReference>
<dbReference type="Pfam" id="PF02780">
    <property type="entry name" value="Transketolase_C"/>
    <property type="match status" value="1"/>
</dbReference>
<dbReference type="SMART" id="SM00861">
    <property type="entry name" value="Transket_pyr"/>
    <property type="match status" value="1"/>
</dbReference>
<dbReference type="SUPFAM" id="SSF52518">
    <property type="entry name" value="Thiamin diphosphate-binding fold (THDP-binding)"/>
    <property type="match status" value="2"/>
</dbReference>
<dbReference type="SUPFAM" id="SSF52922">
    <property type="entry name" value="TK C-terminal domain-like"/>
    <property type="match status" value="1"/>
</dbReference>
<dbReference type="PROSITE" id="PS00801">
    <property type="entry name" value="TRANSKETOLASE_1"/>
    <property type="match status" value="1"/>
</dbReference>
<dbReference type="PROSITE" id="PS00802">
    <property type="entry name" value="TRANSKETOLASE_2"/>
    <property type="match status" value="1"/>
</dbReference>
<proteinExistence type="inferred from homology"/>
<sequence>MTSRPITPLLDTIRGPSDTRGLSVAQLEQLAREVRAEMIDAVSVTGGHLGSGLGVVELTVALHHVFDTPDDRIIWDVGHQCYPHKILTGRRDRIRTLRQGGGLSGFTLREESPYDPFGAGHSSTSISAGLGMAIGSALAGDARDVVAVIGDGSMSAGMAYEAMNNAGAAKSRLIVILNDNDMSIAPPVGAMSAYLSRLLSSKSWLSIRTLAKEIVARLPDALERTAKRAEEYARGMVTGGGTLFEELGFYYVGPIDGHRMDHLVPVLRNVREAGRDGPVLIHVVTQKGKGYAPAENAPDKYHGVSRFNVVTGVQEKAKPQAPSYTAVFGKQLVAAAAKDHRIVGVTAAMPGGTGLDKLATAYPQRCFDVGIAEQHAVTFAAGLACEGLKPFVALYSSFLQRGYDQVVHDVVLQKLPVRFAIDRAGFVGADGATHGGVFDMAFLGCLPNLVVMCAADEAELARMVVTAAGHDSGPIALRYPRGEGVGVEIPEDPQPLAIGKGRIVREGKGVALLSIGTRLQSCLEACEILAARGLTPTVADARFLKPFDEELVADLAARHEVLIVVEEGAIGGFGAHVATWLTNQGLLDGGLKLRALHIPDRFFEHDAPEVQCAKAGIDAQAITTAVLDALKLETSATIDAGALKA</sequence>
<evidence type="ECO:0000255" key="1">
    <source>
        <dbReference type="HAMAP-Rule" id="MF_00315"/>
    </source>
</evidence>
<feature type="chain" id="PRO_0000256473" description="1-deoxy-D-xylulose-5-phosphate synthase 1">
    <location>
        <begin position="1"/>
        <end position="645"/>
    </location>
</feature>
<feature type="binding site" evidence="1">
    <location>
        <position position="79"/>
    </location>
    <ligand>
        <name>thiamine diphosphate</name>
        <dbReference type="ChEBI" id="CHEBI:58937"/>
    </ligand>
</feature>
<feature type="binding site" evidence="1">
    <location>
        <begin position="120"/>
        <end position="122"/>
    </location>
    <ligand>
        <name>thiamine diphosphate</name>
        <dbReference type="ChEBI" id="CHEBI:58937"/>
    </ligand>
</feature>
<feature type="binding site" evidence="1">
    <location>
        <position position="151"/>
    </location>
    <ligand>
        <name>Mg(2+)</name>
        <dbReference type="ChEBI" id="CHEBI:18420"/>
    </ligand>
</feature>
<feature type="binding site" evidence="1">
    <location>
        <begin position="152"/>
        <end position="153"/>
    </location>
    <ligand>
        <name>thiamine diphosphate</name>
        <dbReference type="ChEBI" id="CHEBI:58937"/>
    </ligand>
</feature>
<feature type="binding site" evidence="1">
    <location>
        <position position="180"/>
    </location>
    <ligand>
        <name>Mg(2+)</name>
        <dbReference type="ChEBI" id="CHEBI:18420"/>
    </ligand>
</feature>
<feature type="binding site" evidence="1">
    <location>
        <position position="180"/>
    </location>
    <ligand>
        <name>thiamine diphosphate</name>
        <dbReference type="ChEBI" id="CHEBI:58937"/>
    </ligand>
</feature>
<feature type="binding site" evidence="1">
    <location>
        <position position="291"/>
    </location>
    <ligand>
        <name>thiamine diphosphate</name>
        <dbReference type="ChEBI" id="CHEBI:58937"/>
    </ligand>
</feature>
<feature type="binding site" evidence="1">
    <location>
        <position position="373"/>
    </location>
    <ligand>
        <name>thiamine diphosphate</name>
        <dbReference type="ChEBI" id="CHEBI:58937"/>
    </ligand>
</feature>
<accession>Q2RYD6</accession>
<name>DXS1_RHORT</name>
<keyword id="KW-0414">Isoprene biosynthesis</keyword>
<keyword id="KW-0460">Magnesium</keyword>
<keyword id="KW-0479">Metal-binding</keyword>
<keyword id="KW-1185">Reference proteome</keyword>
<keyword id="KW-0784">Thiamine biosynthesis</keyword>
<keyword id="KW-0786">Thiamine pyrophosphate</keyword>
<keyword id="KW-0808">Transferase</keyword>